<dbReference type="EMBL" id="AE015929">
    <property type="protein sequence ID" value="AAO05730.1"/>
    <property type="molecule type" value="Genomic_DNA"/>
</dbReference>
<dbReference type="RefSeq" id="NP_765643.1">
    <property type="nucleotide sequence ID" value="NC_004461.1"/>
</dbReference>
<dbReference type="RefSeq" id="WP_002447102.1">
    <property type="nucleotide sequence ID" value="NZ_WBME01000013.1"/>
</dbReference>
<dbReference type="SMR" id="Q8CN16"/>
<dbReference type="GeneID" id="50017829"/>
<dbReference type="KEGG" id="sep:SE_2088"/>
<dbReference type="PATRIC" id="fig|176280.10.peg.2040"/>
<dbReference type="eggNOG" id="COG4975">
    <property type="taxonomic scope" value="Bacteria"/>
</dbReference>
<dbReference type="HOGENOM" id="CLU_076024_0_1_9"/>
<dbReference type="OrthoDB" id="1452595at2"/>
<dbReference type="Proteomes" id="UP000001411">
    <property type="component" value="Chromosome"/>
</dbReference>
<dbReference type="GO" id="GO:0005886">
    <property type="term" value="C:plasma membrane"/>
    <property type="evidence" value="ECO:0007669"/>
    <property type="project" value="UniProtKB-SubCell"/>
</dbReference>
<dbReference type="GO" id="GO:0015144">
    <property type="term" value="F:carbohydrate transmembrane transporter activity"/>
    <property type="evidence" value="ECO:0007669"/>
    <property type="project" value="InterPro"/>
</dbReference>
<dbReference type="CDD" id="cd23111">
    <property type="entry name" value="ribose_uptake_RbsU"/>
    <property type="match status" value="1"/>
</dbReference>
<dbReference type="InterPro" id="IPR010651">
    <property type="entry name" value="Sugar_transport"/>
</dbReference>
<dbReference type="NCBIfam" id="NF047342">
    <property type="entry name" value="symport_RbsU"/>
    <property type="match status" value="1"/>
</dbReference>
<dbReference type="PANTHER" id="PTHR16119">
    <property type="entry name" value="TRANSMEMBRANE PROTEIN 144"/>
    <property type="match status" value="1"/>
</dbReference>
<dbReference type="PANTHER" id="PTHR16119:SF17">
    <property type="entry name" value="TRANSMEMBRANE PROTEIN 144"/>
    <property type="match status" value="1"/>
</dbReference>
<dbReference type="Pfam" id="PF06800">
    <property type="entry name" value="Sugar_transport"/>
    <property type="match status" value="1"/>
</dbReference>
<evidence type="ECO:0000250" key="1"/>
<evidence type="ECO:0000255" key="2"/>
<evidence type="ECO:0000305" key="3"/>
<gene>
    <name type="primary">rbsU</name>
    <name type="ordered locus">SE_2088</name>
</gene>
<feature type="chain" id="PRO_0000213643" description="Putative ribose uptake protein RbsU">
    <location>
        <begin position="1"/>
        <end position="293"/>
    </location>
</feature>
<feature type="transmembrane region" description="Helical" evidence="2">
    <location>
        <begin position="5"/>
        <end position="24"/>
    </location>
</feature>
<feature type="transmembrane region" description="Helical" evidence="2">
    <location>
        <begin position="34"/>
        <end position="51"/>
    </location>
</feature>
<feature type="transmembrane region" description="Helical" evidence="2">
    <location>
        <begin position="58"/>
        <end position="80"/>
    </location>
</feature>
<feature type="transmembrane region" description="Helical" evidence="2">
    <location>
        <begin position="95"/>
        <end position="114"/>
    </location>
</feature>
<feature type="transmembrane region" description="Helical" evidence="2">
    <location>
        <begin position="121"/>
        <end position="138"/>
    </location>
</feature>
<feature type="transmembrane region" description="Helical" evidence="2">
    <location>
        <begin position="153"/>
        <end position="170"/>
    </location>
</feature>
<feature type="transmembrane region" description="Helical" evidence="2">
    <location>
        <begin position="177"/>
        <end position="199"/>
    </location>
</feature>
<feature type="transmembrane region" description="Helical" evidence="2">
    <location>
        <begin position="212"/>
        <end position="234"/>
    </location>
</feature>
<feature type="transmembrane region" description="Helical" evidence="2">
    <location>
        <begin position="241"/>
        <end position="263"/>
    </location>
</feature>
<feature type="transmembrane region" description="Helical" evidence="2">
    <location>
        <begin position="273"/>
        <end position="292"/>
    </location>
</feature>
<proteinExistence type="inferred from homology"/>
<organism>
    <name type="scientific">Staphylococcus epidermidis (strain ATCC 12228 / FDA PCI 1200)</name>
    <dbReference type="NCBI Taxonomy" id="176280"/>
    <lineage>
        <taxon>Bacteria</taxon>
        <taxon>Bacillati</taxon>
        <taxon>Bacillota</taxon>
        <taxon>Bacilli</taxon>
        <taxon>Bacillales</taxon>
        <taxon>Staphylococcaceae</taxon>
        <taxon>Staphylococcus</taxon>
    </lineage>
</organism>
<reference key="1">
    <citation type="journal article" date="2003" name="Mol. Microbiol.">
        <title>Genome-based analysis of virulence genes in a non-biofilm-forming Staphylococcus epidermidis strain (ATCC 12228).</title>
        <authorList>
            <person name="Zhang Y.-Q."/>
            <person name="Ren S.-X."/>
            <person name="Li H.-L."/>
            <person name="Wang Y.-X."/>
            <person name="Fu G."/>
            <person name="Yang J."/>
            <person name="Qin Z.-Q."/>
            <person name="Miao Y.-G."/>
            <person name="Wang W.-Y."/>
            <person name="Chen R.-S."/>
            <person name="Shen Y."/>
            <person name="Chen Z."/>
            <person name="Yuan Z.-H."/>
            <person name="Zhao G.-P."/>
            <person name="Qu D."/>
            <person name="Danchin A."/>
            <person name="Wen Y.-M."/>
        </authorList>
    </citation>
    <scope>NUCLEOTIDE SEQUENCE [LARGE SCALE GENOMIC DNA]</scope>
    <source>
        <strain>ATCC 12228 / FDA PCI 1200</strain>
    </source>
</reference>
<protein>
    <recommendedName>
        <fullName>Putative ribose uptake protein RbsU</fullName>
    </recommendedName>
</protein>
<name>RBSU_STAES</name>
<comment type="function">
    <text evidence="1">Could be involved in the uptake of ribose.</text>
</comment>
<comment type="subcellular location">
    <subcellularLocation>
        <location evidence="3">Cell membrane</location>
        <topology evidence="3">Multi-pass membrane protein</topology>
    </subcellularLocation>
</comment>
<comment type="similarity">
    <text evidence="3">Belongs to the GRP transporter (TC 2.A.7.5) family.</text>
</comment>
<accession>Q8CN16</accession>
<keyword id="KW-1003">Cell membrane</keyword>
<keyword id="KW-0472">Membrane</keyword>
<keyword id="KW-0762">Sugar transport</keyword>
<keyword id="KW-0812">Transmembrane</keyword>
<keyword id="KW-1133">Transmembrane helix</keyword>
<keyword id="KW-0813">Transport</keyword>
<sequence length="293" mass="31274">MDFIAILIGLGPLLGWGLFPTIASKFGGRPVNQIFGATVGTLIFAIVLALFKGIGLPGGMALVFSLISGAGWAFGQIITFKAFELVGSSRAMPITTAFQLLGASLWGVFALGNWPGITNKIIGFLALLVILIGARMTVWTETKQQEYSKNLRSAVLLLLVGEIGYWIYSAAPQATDIGGFKAFLPQAIGMVIVAVIYALMNMSKGNAFKEKVSWQQIISGFFFAFAALTYLISAQPNMNGLATGFVLSQTSVVLATLTGIFFLNQKKTSKELMITIVGLVLILVAASITVFIK</sequence>